<proteinExistence type="evidence at protein level"/>
<dbReference type="EC" id="4.2.1.-" evidence="6"/>
<dbReference type="EMBL" id="JX421685">
    <property type="protein sequence ID" value="AFT91395.1"/>
    <property type="molecule type" value="Genomic_DNA"/>
</dbReference>
<dbReference type="SMR" id="K0E2G4"/>
<dbReference type="BioCyc" id="MetaCyc:MONOMER-19235"/>
<dbReference type="GO" id="GO:0051536">
    <property type="term" value="F:iron-sulfur cluster binding"/>
    <property type="evidence" value="ECO:0007669"/>
    <property type="project" value="UniProtKB-KW"/>
</dbReference>
<dbReference type="GO" id="GO:0016829">
    <property type="term" value="F:lyase activity"/>
    <property type="evidence" value="ECO:0007669"/>
    <property type="project" value="UniProtKB-KW"/>
</dbReference>
<dbReference type="GO" id="GO:0046872">
    <property type="term" value="F:metal ion binding"/>
    <property type="evidence" value="ECO:0007669"/>
    <property type="project" value="UniProtKB-KW"/>
</dbReference>
<dbReference type="GO" id="GO:0170034">
    <property type="term" value="P:L-amino acid biosynthetic process"/>
    <property type="evidence" value="ECO:0007669"/>
    <property type="project" value="UniProtKB-ARBA"/>
</dbReference>
<dbReference type="GO" id="GO:0170038">
    <property type="term" value="P:proteinogenic amino acid biosynthetic process"/>
    <property type="evidence" value="ECO:0007669"/>
    <property type="project" value="UniProtKB-ARBA"/>
</dbReference>
<dbReference type="CDD" id="cd01577">
    <property type="entry name" value="IPMI_Swivel"/>
    <property type="match status" value="1"/>
</dbReference>
<dbReference type="Gene3D" id="3.30.499.10">
    <property type="entry name" value="Aconitase, domain 3"/>
    <property type="match status" value="2"/>
</dbReference>
<dbReference type="Gene3D" id="3.20.19.10">
    <property type="entry name" value="Aconitase, domain 4"/>
    <property type="match status" value="1"/>
</dbReference>
<dbReference type="InterPro" id="IPR015931">
    <property type="entry name" value="Acnase/IPM_dHydase_lsu_aba_1/3"/>
</dbReference>
<dbReference type="InterPro" id="IPR001030">
    <property type="entry name" value="Acoase/IPM_deHydtase_lsu_aba"/>
</dbReference>
<dbReference type="InterPro" id="IPR015928">
    <property type="entry name" value="Aconitase/3IPM_dehydase_swvl"/>
</dbReference>
<dbReference type="InterPro" id="IPR018136">
    <property type="entry name" value="Aconitase_4Fe-4S_BS"/>
</dbReference>
<dbReference type="InterPro" id="IPR036008">
    <property type="entry name" value="Aconitase_4Fe-4S_dom"/>
</dbReference>
<dbReference type="InterPro" id="IPR000573">
    <property type="entry name" value="AconitaseA/IPMdHydase_ssu_swvl"/>
</dbReference>
<dbReference type="InterPro" id="IPR050067">
    <property type="entry name" value="IPM_dehydratase_rel_enz"/>
</dbReference>
<dbReference type="InterPro" id="IPR033940">
    <property type="entry name" value="IPMI_Swivel"/>
</dbReference>
<dbReference type="PANTHER" id="PTHR43822:SF2">
    <property type="entry name" value="HOMOACONITASE, MITOCHONDRIAL"/>
    <property type="match status" value="1"/>
</dbReference>
<dbReference type="PANTHER" id="PTHR43822">
    <property type="entry name" value="HOMOACONITASE, MITOCHONDRIAL-RELATED"/>
    <property type="match status" value="1"/>
</dbReference>
<dbReference type="Pfam" id="PF00330">
    <property type="entry name" value="Aconitase"/>
    <property type="match status" value="2"/>
</dbReference>
<dbReference type="Pfam" id="PF00694">
    <property type="entry name" value="Aconitase_C"/>
    <property type="match status" value="1"/>
</dbReference>
<dbReference type="PRINTS" id="PR00415">
    <property type="entry name" value="ACONITASE"/>
</dbReference>
<dbReference type="SUPFAM" id="SSF53732">
    <property type="entry name" value="Aconitase iron-sulfur domain"/>
    <property type="match status" value="1"/>
</dbReference>
<dbReference type="SUPFAM" id="SSF52016">
    <property type="entry name" value="LeuD/IlvD-like"/>
    <property type="match status" value="1"/>
</dbReference>
<dbReference type="PROSITE" id="PS01244">
    <property type="entry name" value="ACONITASE_2"/>
    <property type="match status" value="1"/>
</dbReference>
<comment type="function">
    <text evidence="3">Aconitase; part of the gene cluster that mediates the de novo generation of L-homotyrosine from acetyl-CoA and 4-hydroxyphenyl-pyruvate (PubMed:22998630). L-homotyrosine is a building block of echinocandin B, a fungal lipidated cyclic hexapeptide that acts as an antifungal agent (PubMed:22998630). L-homotyrosine 4-hydroxyphenyl-pyruvate first undergoes an aldol-type condensation by htyA with the C-2 of acetyl-CoA followed by the release of CoA to form 2-(4-hydroxybenzyl)-malate (PubMed:22998630). This is followed by isomerization of 2-(4-hydroxy-benzyl)-malate to 3-(4-hydroxybenzyl)-malate by htyD (PubMed:22998630). Thereafter, 3-(4-hydroxybenzyl)-malate undergoes decarboxylation and oxidation to form 2-oxo-4-(4-hydroxybenzyl)butanoic acid, coupled to reduction of NAD(+) to NADH by htyC (PubMed:22998630). The product then undergoes transamination catalyzed by htyB to form L-homotyrosine (PubMed:22998630).</text>
</comment>
<comment type="pathway">
    <text evidence="6">Antifungal biosynthesis.</text>
</comment>
<comment type="biotechnology">
    <text evidence="3">Due to their effectiveness as antifungal agents, echinocandin derivatives can be used for the treatment of human invasive candidiasis (PubMed:22998630).</text>
</comment>
<comment type="similarity">
    <text evidence="5">Belongs to the aconitase/IPM isomerase family.</text>
</comment>
<reference key="1">
    <citation type="journal article" date="2012" name="J. Am. Chem. Soc.">
        <title>Identification and characterization of the echinocandin B biosynthetic gene cluster from Emericella rugulosa NRRL 11440.</title>
        <authorList>
            <person name="Cacho R.A."/>
            <person name="Jiang W."/>
            <person name="Chooi Y.H."/>
            <person name="Walsh C.T."/>
            <person name="Tang Y."/>
        </authorList>
    </citation>
    <scope>NUCLEOTIDE SEQUENCE [GENOMIC DNA]</scope>
    <scope>FUNCTION</scope>
    <scope>PATHWAY</scope>
    <scope>BIOTECHNOLOGY</scope>
    <source>
        <strain>ATCC 58397 / NRRL 11440</strain>
    </source>
</reference>
<name>HTYD_ASPRU</name>
<accession>K0E2G4</accession>
<evidence type="ECO:0000250" key="1">
    <source>
        <dbReference type="UniProtKB" id="P20004"/>
    </source>
</evidence>
<evidence type="ECO:0000256" key="2">
    <source>
        <dbReference type="SAM" id="MobiDB-lite"/>
    </source>
</evidence>
<evidence type="ECO:0000269" key="3">
    <source>
    </source>
</evidence>
<evidence type="ECO:0000303" key="4">
    <source>
    </source>
</evidence>
<evidence type="ECO:0000305" key="5"/>
<evidence type="ECO:0000305" key="6">
    <source>
    </source>
</evidence>
<sequence>MSEGSISLCFLGSLPNDVVNFVRAVVRILADIRGIVVEERSAEELSLSNPPTLTLAALDNTEPGSPAICSLYAFLTHLCTALETIGRHAEVSSLQHVLDLCRTTTDRGGLAIIRDESSGWTSGPTQLQSVQSLIEAWLEALNAAESATQLPAPLPAKTPNTWPMTLAEKILVQHAFSLPSPQGVSVGELMRVSVDWVIASELSWVGMKHSMISIGEQPTVWRNDRFWLAGDHTVDPRTYHQPRVQELIGGMEDAKKTFKMTENQGSNYTILHTEFVRERAEPGMLVIGSDSHTCSAGAVSSLAIGLGAADVMAALATGETWFKSPESIRVEFSGEPAWYIRGKDIILYILKKLKRNTHAADRIVEFGGPGAKHLSCDARFAICNMCTELGAITGIFVPDEVTHQFISNRRHSRYRSNSVYFQPDSDASYAATFQIDLSEVESFIALYPSPDNVVPVTETLDMPLDGCFIGACTTTEEDLVLAALVLEVGLQQGLELAIGKRMVVPGSLPIVSNLRVLGLLDVFEQAGFEQPAVSCSLCLGMGADRAGHGENWLSSQNRNFKNRMGHGSIGHICSAAVVAASSFSMRVTDPRPLLSQIPPERYQTLLDKCRDWRSAEPAARRHPGKIAIANQRTKPAPTMPAYVEPYRSFQPPVPPSSDQPQSMKDHGKTSNGENGILISKVYALGDFVDTDAIIPAAFILESPTDVLLGSHCLEFTNPDFRSQVRAGLEVVVAGKAFGCGSSREEAPRALKGLGVKCVIAKSFSFIYGRNQPTIGLLGIVITDERFYDAARTGVAIEINPSARTVTVAGQSFPFVMDDMELALIRRDGLATAYKALGKGVFRSLCADVPGKGGCGQTQGTIYMQVSMSLRVTPAVSRD</sequence>
<gene>
    <name evidence="4" type="primary">htyD</name>
</gene>
<keyword id="KW-0408">Iron</keyword>
<keyword id="KW-0411">Iron-sulfur</keyword>
<keyword id="KW-0456">Lyase</keyword>
<keyword id="KW-0479">Metal-binding</keyword>
<feature type="chain" id="PRO_0000443854" description="Aconitase htyD">
    <location>
        <begin position="1"/>
        <end position="878"/>
    </location>
</feature>
<feature type="region of interest" description="Disordered" evidence="2">
    <location>
        <begin position="626"/>
        <end position="671"/>
    </location>
</feature>
<feature type="binding site" evidence="1">
    <location>
        <position position="173"/>
    </location>
    <ligand>
        <name>substrate</name>
    </ligand>
</feature>
<feature type="binding site" evidence="1">
    <location>
        <begin position="290"/>
        <end position="292"/>
    </location>
    <ligand>
        <name>substrate</name>
    </ligand>
</feature>
<feature type="binding site" evidence="1">
    <location>
        <position position="472"/>
    </location>
    <ligand>
        <name>[4Fe-4S] cluster</name>
        <dbReference type="ChEBI" id="CHEBI:49883"/>
    </ligand>
</feature>
<feature type="binding site" evidence="1">
    <location>
        <position position="535"/>
    </location>
    <ligand>
        <name>[4Fe-4S] cluster</name>
        <dbReference type="ChEBI" id="CHEBI:49883"/>
    </ligand>
</feature>
<feature type="binding site" evidence="1">
    <location>
        <position position="538"/>
    </location>
    <ligand>
        <name>[4Fe-4S] cluster</name>
        <dbReference type="ChEBI" id="CHEBI:49883"/>
    </ligand>
</feature>
<feature type="binding site" evidence="1">
    <location>
        <position position="558"/>
    </location>
    <ligand>
        <name>substrate</name>
    </ligand>
</feature>
<feature type="binding site" evidence="1">
    <location>
        <position position="563"/>
    </location>
    <ligand>
        <name>substrate</name>
    </ligand>
</feature>
<feature type="binding site" evidence="1">
    <location>
        <begin position="742"/>
        <end position="743"/>
    </location>
    <ligand>
        <name>substrate</name>
    </ligand>
</feature>
<organism>
    <name type="scientific">Aspergillus rugulosus</name>
    <name type="common">Emericella rugulosa</name>
    <dbReference type="NCBI Taxonomy" id="41736"/>
    <lineage>
        <taxon>Eukaryota</taxon>
        <taxon>Fungi</taxon>
        <taxon>Dikarya</taxon>
        <taxon>Ascomycota</taxon>
        <taxon>Pezizomycotina</taxon>
        <taxon>Eurotiomycetes</taxon>
        <taxon>Eurotiomycetidae</taxon>
        <taxon>Eurotiales</taxon>
        <taxon>Aspergillaceae</taxon>
        <taxon>Aspergillus</taxon>
        <taxon>Aspergillus subgen. Nidulantes</taxon>
    </lineage>
</organism>
<protein>
    <recommendedName>
        <fullName evidence="4">Aconitase htyD</fullName>
        <ecNumber evidence="6">4.2.1.-</ecNumber>
    </recommendedName>
    <alternativeName>
        <fullName evidence="4">L-homotyrosine biosynthetic cluster protein D</fullName>
    </alternativeName>
</protein>